<name>RL23_NEIMA</name>
<organism>
    <name type="scientific">Neisseria meningitidis serogroup A / serotype 4A (strain DSM 15465 / Z2491)</name>
    <dbReference type="NCBI Taxonomy" id="122587"/>
    <lineage>
        <taxon>Bacteria</taxon>
        <taxon>Pseudomonadati</taxon>
        <taxon>Pseudomonadota</taxon>
        <taxon>Betaproteobacteria</taxon>
        <taxon>Neisseriales</taxon>
        <taxon>Neisseriaceae</taxon>
        <taxon>Neisseria</taxon>
    </lineage>
</organism>
<reference key="1">
    <citation type="journal article" date="2000" name="Nature">
        <title>Complete DNA sequence of a serogroup A strain of Neisseria meningitidis Z2491.</title>
        <authorList>
            <person name="Parkhill J."/>
            <person name="Achtman M."/>
            <person name="James K.D."/>
            <person name="Bentley S.D."/>
            <person name="Churcher C.M."/>
            <person name="Klee S.R."/>
            <person name="Morelli G."/>
            <person name="Basham D."/>
            <person name="Brown D."/>
            <person name="Chillingworth T."/>
            <person name="Davies R.M."/>
            <person name="Davis P."/>
            <person name="Devlin K."/>
            <person name="Feltwell T."/>
            <person name="Hamlin N."/>
            <person name="Holroyd S."/>
            <person name="Jagels K."/>
            <person name="Leather S."/>
            <person name="Moule S."/>
            <person name="Mungall K.L."/>
            <person name="Quail M.A."/>
            <person name="Rajandream M.A."/>
            <person name="Rutherford K.M."/>
            <person name="Simmonds M."/>
            <person name="Skelton J."/>
            <person name="Whitehead S."/>
            <person name="Spratt B.G."/>
            <person name="Barrell B.G."/>
        </authorList>
    </citation>
    <scope>NUCLEOTIDE SEQUENCE [LARGE SCALE GENOMIC DNA]</scope>
    <source>
        <strain>DSM 15465 / Z2491</strain>
    </source>
</reference>
<proteinExistence type="inferred from homology"/>
<feature type="chain" id="PRO_0000272782" description="Large ribosomal subunit protein uL23">
    <location>
        <begin position="1"/>
        <end position="106"/>
    </location>
</feature>
<dbReference type="EMBL" id="AL157959">
    <property type="protein sequence ID" value="CAM07445.1"/>
    <property type="molecule type" value="Genomic_DNA"/>
</dbReference>
<dbReference type="PIR" id="E82005">
    <property type="entry name" value="E82005"/>
</dbReference>
<dbReference type="SMR" id="Q9JX11"/>
<dbReference type="EnsemblBacteria" id="CAM07445">
    <property type="protein sequence ID" value="CAM07445"/>
    <property type="gene ID" value="NMA0127"/>
</dbReference>
<dbReference type="KEGG" id="nma:NMA0127"/>
<dbReference type="HOGENOM" id="CLU_037562_3_1_4"/>
<dbReference type="Proteomes" id="UP000000626">
    <property type="component" value="Chromosome"/>
</dbReference>
<dbReference type="GO" id="GO:1990904">
    <property type="term" value="C:ribonucleoprotein complex"/>
    <property type="evidence" value="ECO:0007669"/>
    <property type="project" value="UniProtKB-KW"/>
</dbReference>
<dbReference type="GO" id="GO:0005840">
    <property type="term" value="C:ribosome"/>
    <property type="evidence" value="ECO:0007669"/>
    <property type="project" value="UniProtKB-KW"/>
</dbReference>
<dbReference type="GO" id="GO:0019843">
    <property type="term" value="F:rRNA binding"/>
    <property type="evidence" value="ECO:0007669"/>
    <property type="project" value="UniProtKB-UniRule"/>
</dbReference>
<dbReference type="GO" id="GO:0003735">
    <property type="term" value="F:structural constituent of ribosome"/>
    <property type="evidence" value="ECO:0007669"/>
    <property type="project" value="InterPro"/>
</dbReference>
<dbReference type="GO" id="GO:0006412">
    <property type="term" value="P:translation"/>
    <property type="evidence" value="ECO:0007669"/>
    <property type="project" value="UniProtKB-UniRule"/>
</dbReference>
<dbReference type="FunFam" id="3.30.70.330:FF:000001">
    <property type="entry name" value="50S ribosomal protein L23"/>
    <property type="match status" value="1"/>
</dbReference>
<dbReference type="Gene3D" id="3.30.70.330">
    <property type="match status" value="1"/>
</dbReference>
<dbReference type="HAMAP" id="MF_01369_B">
    <property type="entry name" value="Ribosomal_uL23_B"/>
    <property type="match status" value="1"/>
</dbReference>
<dbReference type="InterPro" id="IPR012677">
    <property type="entry name" value="Nucleotide-bd_a/b_plait_sf"/>
</dbReference>
<dbReference type="InterPro" id="IPR013025">
    <property type="entry name" value="Ribosomal_uL23-like"/>
</dbReference>
<dbReference type="InterPro" id="IPR012678">
    <property type="entry name" value="Ribosomal_uL23/eL15/eS24_sf"/>
</dbReference>
<dbReference type="NCBIfam" id="NF004359">
    <property type="entry name" value="PRK05738.1-3"/>
    <property type="match status" value="1"/>
</dbReference>
<dbReference type="NCBIfam" id="NF004363">
    <property type="entry name" value="PRK05738.2-4"/>
    <property type="match status" value="1"/>
</dbReference>
<dbReference type="PANTHER" id="PTHR11620">
    <property type="entry name" value="60S RIBOSOMAL PROTEIN L23A"/>
    <property type="match status" value="1"/>
</dbReference>
<dbReference type="Pfam" id="PF00276">
    <property type="entry name" value="Ribosomal_L23"/>
    <property type="match status" value="1"/>
</dbReference>
<dbReference type="SUPFAM" id="SSF54189">
    <property type="entry name" value="Ribosomal proteins S24e, L23 and L15e"/>
    <property type="match status" value="1"/>
</dbReference>
<sequence length="106" mass="11418">MGMNQQRLTQVILAPIVSEKSNVLAEKRNQMTFKVLANATKPEIKAAVELLFGVQVASVTTVTTKGKTKRFGRTLGRRSDVKKAYVSLAAGQELDLEAAAAAADKE</sequence>
<evidence type="ECO:0000255" key="1">
    <source>
        <dbReference type="HAMAP-Rule" id="MF_01369"/>
    </source>
</evidence>
<evidence type="ECO:0000305" key="2"/>
<accession>Q9JX11</accession>
<accession>A1INY8</accession>
<comment type="function">
    <text evidence="1">One of the early assembly proteins it binds 23S rRNA. One of the proteins that surrounds the polypeptide exit tunnel on the outside of the ribosome. Forms the main docking site for trigger factor binding to the ribosome.</text>
</comment>
<comment type="subunit">
    <text evidence="1">Part of the 50S ribosomal subunit. Contacts protein L29, and trigger factor when it is bound to the ribosome.</text>
</comment>
<comment type="similarity">
    <text evidence="1">Belongs to the universal ribosomal protein uL23 family.</text>
</comment>
<keyword id="KW-0687">Ribonucleoprotein</keyword>
<keyword id="KW-0689">Ribosomal protein</keyword>
<keyword id="KW-0694">RNA-binding</keyword>
<keyword id="KW-0699">rRNA-binding</keyword>
<protein>
    <recommendedName>
        <fullName evidence="1">Large ribosomal subunit protein uL23</fullName>
    </recommendedName>
    <alternativeName>
        <fullName evidence="2">50S ribosomal protein L23</fullName>
    </alternativeName>
</protein>
<gene>
    <name evidence="1" type="primary">rplW</name>
    <name type="ordered locus">NMA0127</name>
</gene>